<proteinExistence type="inferred from homology"/>
<reference key="1">
    <citation type="journal article" date="2009" name="J. Bacteriol.">
        <title>Genome sequence of the probiotic bacterium Bifidobacterium animalis subsp. lactis AD011.</title>
        <authorList>
            <person name="Kim J.F."/>
            <person name="Jeong H."/>
            <person name="Yu D.S."/>
            <person name="Choi S.-H."/>
            <person name="Hur C.-G."/>
            <person name="Park M.-S."/>
            <person name="Yoon S.H."/>
            <person name="Kim D.-W."/>
            <person name="Ji G.E."/>
            <person name="Park H.-S."/>
            <person name="Oh T.K."/>
        </authorList>
    </citation>
    <scope>NUCLEOTIDE SEQUENCE [LARGE SCALE GENOMIC DNA]</scope>
    <source>
        <strain>AD011</strain>
    </source>
</reference>
<protein>
    <recommendedName>
        <fullName evidence="1">Chaperonin GroEL</fullName>
        <ecNumber evidence="1">5.6.1.7</ecNumber>
    </recommendedName>
    <alternativeName>
        <fullName evidence="1">60 kDa chaperonin</fullName>
    </alternativeName>
    <alternativeName>
        <fullName evidence="1">Chaperonin-60</fullName>
        <shortName evidence="1">Cpn60</shortName>
    </alternativeName>
</protein>
<accession>B8DTZ2</accession>
<evidence type="ECO:0000255" key="1">
    <source>
        <dbReference type="HAMAP-Rule" id="MF_00600"/>
    </source>
</evidence>
<comment type="function">
    <text evidence="1">Together with its co-chaperonin GroES, plays an essential role in assisting protein folding. The GroEL-GroES system forms a nano-cage that allows encapsulation of the non-native substrate proteins and provides a physical environment optimized to promote and accelerate protein folding.</text>
</comment>
<comment type="catalytic activity">
    <reaction evidence="1">
        <text>ATP + H2O + a folded polypeptide = ADP + phosphate + an unfolded polypeptide.</text>
        <dbReference type="EC" id="5.6.1.7"/>
    </reaction>
</comment>
<comment type="subunit">
    <text evidence="1">Forms a cylinder of 14 subunits composed of two heptameric rings stacked back-to-back. Interacts with the co-chaperonin GroES.</text>
</comment>
<comment type="subcellular location">
    <subcellularLocation>
        <location evidence="1">Cytoplasm</location>
    </subcellularLocation>
</comment>
<comment type="similarity">
    <text evidence="1">Belongs to the chaperonin (HSP60) family.</text>
</comment>
<sequence length="537" mass="56438">MAKIIEYDEEARQGMLAGLDKLADTVKVTLGPKGRNVVLDKTYGAPTITNDGVSIAKEIDLEDPFERIGAELVKEVAKRTDDVAGDGTTTATVLAQSLVHEGLKNVVAGSNPIALRRGIEKASDALVKQLVASAKPVETKEQIAATATISAGDPEVGEKIAEALDKVGQDGVVTVEDNNRFGLDLDFTEGMRFDKGYISPYFVTNAEDQTAVLDDPYILLTSSKVSSQQDVVHIAELVMKTGKPLLIVAEDVDGEALPTLILNNIRGTFKSCAVKAPGFGDRRKAMLQDMAILTGGQVVSEDLGLKLDSIDLSVFGTAKKVIVSKDETTIVSGGGSKEDVAARVAQIRAEIEKTDSDYDREKLQERLAKLAGGVAVIKVGAATEVEAKERKHRIEDAVRNAKAAIEEGLVPGGGVALVQAAEKVEKDFNLEGDEATGAAIVFSGIEAPIKQIAENAGLSGAVVIDKVRSLPEGEGFNAATDTYEDLMAAGVTDPVKVTRSALQNAASIAGLFLTTEAVVANKPEPAAAPAAGQDMGY</sequence>
<dbReference type="EC" id="5.6.1.7" evidence="1"/>
<dbReference type="EMBL" id="CP001213">
    <property type="protein sequence ID" value="ACL29471.1"/>
    <property type="molecule type" value="Genomic_DNA"/>
</dbReference>
<dbReference type="RefSeq" id="WP_004218937.1">
    <property type="nucleotide sequence ID" value="NC_011835.1"/>
</dbReference>
<dbReference type="SMR" id="B8DTZ2"/>
<dbReference type="STRING" id="442563.BLA_1183"/>
<dbReference type="GeneID" id="29696381"/>
<dbReference type="KEGG" id="bla:BLA_1183"/>
<dbReference type="HOGENOM" id="CLU_016503_3_0_11"/>
<dbReference type="Proteomes" id="UP000002456">
    <property type="component" value="Chromosome"/>
</dbReference>
<dbReference type="GO" id="GO:0005737">
    <property type="term" value="C:cytoplasm"/>
    <property type="evidence" value="ECO:0007669"/>
    <property type="project" value="UniProtKB-SubCell"/>
</dbReference>
<dbReference type="GO" id="GO:0005524">
    <property type="term" value="F:ATP binding"/>
    <property type="evidence" value="ECO:0007669"/>
    <property type="project" value="UniProtKB-UniRule"/>
</dbReference>
<dbReference type="GO" id="GO:0140662">
    <property type="term" value="F:ATP-dependent protein folding chaperone"/>
    <property type="evidence" value="ECO:0007669"/>
    <property type="project" value="InterPro"/>
</dbReference>
<dbReference type="GO" id="GO:0016853">
    <property type="term" value="F:isomerase activity"/>
    <property type="evidence" value="ECO:0007669"/>
    <property type="project" value="UniProtKB-KW"/>
</dbReference>
<dbReference type="GO" id="GO:0051082">
    <property type="term" value="F:unfolded protein binding"/>
    <property type="evidence" value="ECO:0007669"/>
    <property type="project" value="UniProtKB-UniRule"/>
</dbReference>
<dbReference type="GO" id="GO:0042026">
    <property type="term" value="P:protein refolding"/>
    <property type="evidence" value="ECO:0007669"/>
    <property type="project" value="UniProtKB-UniRule"/>
</dbReference>
<dbReference type="CDD" id="cd03344">
    <property type="entry name" value="GroEL"/>
    <property type="match status" value="1"/>
</dbReference>
<dbReference type="FunFam" id="3.50.7.10:FF:000001">
    <property type="entry name" value="60 kDa chaperonin"/>
    <property type="match status" value="1"/>
</dbReference>
<dbReference type="Gene3D" id="3.50.7.10">
    <property type="entry name" value="GroEL"/>
    <property type="match status" value="1"/>
</dbReference>
<dbReference type="Gene3D" id="1.10.560.10">
    <property type="entry name" value="GroEL-like equatorial domain"/>
    <property type="match status" value="1"/>
</dbReference>
<dbReference type="Gene3D" id="3.30.260.10">
    <property type="entry name" value="TCP-1-like chaperonin intermediate domain"/>
    <property type="match status" value="1"/>
</dbReference>
<dbReference type="HAMAP" id="MF_00600">
    <property type="entry name" value="CH60"/>
    <property type="match status" value="1"/>
</dbReference>
<dbReference type="InterPro" id="IPR018370">
    <property type="entry name" value="Chaperonin_Cpn60_CS"/>
</dbReference>
<dbReference type="InterPro" id="IPR001844">
    <property type="entry name" value="Cpn60/GroEL"/>
</dbReference>
<dbReference type="InterPro" id="IPR002423">
    <property type="entry name" value="Cpn60/GroEL/TCP-1"/>
</dbReference>
<dbReference type="InterPro" id="IPR027409">
    <property type="entry name" value="GroEL-like_apical_dom_sf"/>
</dbReference>
<dbReference type="InterPro" id="IPR027413">
    <property type="entry name" value="GROEL-like_equatorial_sf"/>
</dbReference>
<dbReference type="InterPro" id="IPR027410">
    <property type="entry name" value="TCP-1-like_intermed_sf"/>
</dbReference>
<dbReference type="NCBIfam" id="TIGR02348">
    <property type="entry name" value="GroEL"/>
    <property type="match status" value="1"/>
</dbReference>
<dbReference type="NCBIfam" id="NF000592">
    <property type="entry name" value="PRK00013.1"/>
    <property type="match status" value="1"/>
</dbReference>
<dbReference type="NCBIfam" id="NF009487">
    <property type="entry name" value="PRK12849.1"/>
    <property type="match status" value="1"/>
</dbReference>
<dbReference type="NCBIfam" id="NF009488">
    <property type="entry name" value="PRK12850.1"/>
    <property type="match status" value="1"/>
</dbReference>
<dbReference type="NCBIfam" id="NF009489">
    <property type="entry name" value="PRK12851.1"/>
    <property type="match status" value="1"/>
</dbReference>
<dbReference type="PANTHER" id="PTHR45633">
    <property type="entry name" value="60 KDA HEAT SHOCK PROTEIN, MITOCHONDRIAL"/>
    <property type="match status" value="1"/>
</dbReference>
<dbReference type="Pfam" id="PF00118">
    <property type="entry name" value="Cpn60_TCP1"/>
    <property type="match status" value="1"/>
</dbReference>
<dbReference type="PRINTS" id="PR00298">
    <property type="entry name" value="CHAPERONIN60"/>
</dbReference>
<dbReference type="SUPFAM" id="SSF52029">
    <property type="entry name" value="GroEL apical domain-like"/>
    <property type="match status" value="1"/>
</dbReference>
<dbReference type="SUPFAM" id="SSF48592">
    <property type="entry name" value="GroEL equatorial domain-like"/>
    <property type="match status" value="1"/>
</dbReference>
<dbReference type="SUPFAM" id="SSF54849">
    <property type="entry name" value="GroEL-intermediate domain like"/>
    <property type="match status" value="1"/>
</dbReference>
<dbReference type="PROSITE" id="PS00296">
    <property type="entry name" value="CHAPERONINS_CPN60"/>
    <property type="match status" value="1"/>
</dbReference>
<feature type="chain" id="PRO_1000147017" description="Chaperonin GroEL">
    <location>
        <begin position="1"/>
        <end position="537"/>
    </location>
</feature>
<feature type="binding site" evidence="1">
    <location>
        <begin position="29"/>
        <end position="32"/>
    </location>
    <ligand>
        <name>ATP</name>
        <dbReference type="ChEBI" id="CHEBI:30616"/>
    </ligand>
</feature>
<feature type="binding site" evidence="1">
    <location>
        <begin position="86"/>
        <end position="90"/>
    </location>
    <ligand>
        <name>ATP</name>
        <dbReference type="ChEBI" id="CHEBI:30616"/>
    </ligand>
</feature>
<feature type="binding site" evidence="1">
    <location>
        <position position="413"/>
    </location>
    <ligand>
        <name>ATP</name>
        <dbReference type="ChEBI" id="CHEBI:30616"/>
    </ligand>
</feature>
<feature type="binding site" evidence="1">
    <location>
        <begin position="477"/>
        <end position="479"/>
    </location>
    <ligand>
        <name>ATP</name>
        <dbReference type="ChEBI" id="CHEBI:30616"/>
    </ligand>
</feature>
<feature type="binding site" evidence="1">
    <location>
        <position position="493"/>
    </location>
    <ligand>
        <name>ATP</name>
        <dbReference type="ChEBI" id="CHEBI:30616"/>
    </ligand>
</feature>
<keyword id="KW-0067">ATP-binding</keyword>
<keyword id="KW-0143">Chaperone</keyword>
<keyword id="KW-0963">Cytoplasm</keyword>
<keyword id="KW-0413">Isomerase</keyword>
<keyword id="KW-0547">Nucleotide-binding</keyword>
<keyword id="KW-1185">Reference proteome</keyword>
<name>CH60_BIFA0</name>
<organism>
    <name type="scientific">Bifidobacterium animalis subsp. lactis (strain AD011)</name>
    <dbReference type="NCBI Taxonomy" id="442563"/>
    <lineage>
        <taxon>Bacteria</taxon>
        <taxon>Bacillati</taxon>
        <taxon>Actinomycetota</taxon>
        <taxon>Actinomycetes</taxon>
        <taxon>Bifidobacteriales</taxon>
        <taxon>Bifidobacteriaceae</taxon>
        <taxon>Bifidobacterium</taxon>
    </lineage>
</organism>
<gene>
    <name evidence="1" type="primary">groEL</name>
    <name evidence="1" type="synonym">groL</name>
    <name type="ordered locus">BLA_1183</name>
</gene>